<evidence type="ECO:0000250" key="1"/>
<evidence type="ECO:0000255" key="2">
    <source>
        <dbReference type="HAMAP-Rule" id="MF_00610"/>
    </source>
</evidence>
<evidence type="ECO:0000312" key="3">
    <source>
        <dbReference type="Proteomes" id="UP000006591"/>
    </source>
</evidence>
<sequence>MENRNTFSWVKEQMTRSISVSIMIYVITRTSISNAYPIFAQQGYENPREATGRIVCANCHLANKPVDIEVPQAVLPDTVFEAVLRIPYDMQLKQVLANGKKGGLNVGAVLILPEGFELAPPDRISPELKEKIGNLSFQSYRPNKKNILVIGPVPGKKYSEIVFPILSPDPAMKKDVHFLKYPIYVGGNRGRGQIYPDGSKSNNTVYNATSTGVVRKILRKEKGGYEISIVDASDGRQVIDLIPPGPELLVSEGESIKLDQPLTSNPNVGGFGQGDAEIVLQDPLRVQGLLFFFASVILAQVFLVLKKKQFEKVQLYEMNF</sequence>
<feature type="signal peptide" evidence="2">
    <location>
        <begin position="1"/>
        <end position="35"/>
    </location>
</feature>
<feature type="chain" id="PRO_0000023825" description="Cytochrome f">
    <location>
        <begin position="36"/>
        <end position="320"/>
    </location>
</feature>
<feature type="transmembrane region" description="Helical" evidence="2">
    <location>
        <begin position="286"/>
        <end position="306"/>
    </location>
</feature>
<feature type="binding site" description="axial binding residue" evidence="2">
    <location>
        <position position="36"/>
    </location>
    <ligand>
        <name>heme</name>
        <dbReference type="ChEBI" id="CHEBI:30413"/>
    </ligand>
    <ligandPart>
        <name>Fe</name>
        <dbReference type="ChEBI" id="CHEBI:18248"/>
    </ligandPart>
</feature>
<feature type="binding site" description="covalent" evidence="2">
    <location>
        <position position="56"/>
    </location>
    <ligand>
        <name>heme</name>
        <dbReference type="ChEBI" id="CHEBI:30413"/>
    </ligand>
</feature>
<feature type="binding site" description="covalent" evidence="2">
    <location>
        <position position="59"/>
    </location>
    <ligand>
        <name>heme</name>
        <dbReference type="ChEBI" id="CHEBI:30413"/>
    </ligand>
</feature>
<feature type="binding site" description="axial binding residue" evidence="2">
    <location>
        <position position="60"/>
    </location>
    <ligand>
        <name>heme</name>
        <dbReference type="ChEBI" id="CHEBI:30413"/>
    </ligand>
    <ligandPart>
        <name>Fe</name>
        <dbReference type="ChEBI" id="CHEBI:18248"/>
    </ligandPart>
</feature>
<protein>
    <recommendedName>
        <fullName evidence="2">Cytochrome f</fullName>
    </recommendedName>
</protein>
<geneLocation type="chloroplast"/>
<reference key="1">
    <citation type="journal article" date="2004" name="Gene">
        <title>The complete nucleotide sequence of wild rice (Oryza nivara) chloroplast genome: first genome wide comparative sequence analysis of wild and cultivated rice.</title>
        <authorList>
            <person name="Masood M.S."/>
            <person name="Nishikawa T."/>
            <person name="Fukuoka S."/>
            <person name="Njenga P.K."/>
            <person name="Tsudzuki T."/>
            <person name="Kadowaki K."/>
        </authorList>
    </citation>
    <scope>NUCLEOTIDE SEQUENCE [LARGE SCALE GENOMIC DNA]</scope>
    <source>
        <strain evidence="3">cv. SL10</strain>
    </source>
</reference>
<proteinExistence type="inferred from homology"/>
<comment type="function">
    <text evidence="2">Component of the cytochrome b6-f complex, which mediates electron transfer between photosystem II (PSII) and photosystem I (PSI), cyclic electron flow around PSI, and state transitions.</text>
</comment>
<comment type="cofactor">
    <cofactor evidence="2">
        <name>heme</name>
        <dbReference type="ChEBI" id="CHEBI:30413"/>
    </cofactor>
    <text evidence="2">Binds 1 heme group covalently.</text>
</comment>
<comment type="subunit">
    <text evidence="1">The 4 large subunits of the cytochrome b6-f complex are cytochrome b6, subunit IV (17 kDa polypeptide, petD), cytochrome f and the Rieske protein, while the 4 small subunits are PetG, PetL, PetM and PetN. The complex functions as a dimer (By similarity).</text>
</comment>
<comment type="subcellular location">
    <subcellularLocation>
        <location evidence="2">Plastid</location>
        <location evidence="2">Chloroplast thylakoid membrane</location>
        <topology evidence="2">Single-pass membrane protein</topology>
    </subcellularLocation>
</comment>
<comment type="similarity">
    <text evidence="2">Belongs to the cytochrome f family.</text>
</comment>
<gene>
    <name evidence="2" type="primary">petA</name>
</gene>
<keyword id="KW-0150">Chloroplast</keyword>
<keyword id="KW-0249">Electron transport</keyword>
<keyword id="KW-0349">Heme</keyword>
<keyword id="KW-0408">Iron</keyword>
<keyword id="KW-0472">Membrane</keyword>
<keyword id="KW-0479">Metal-binding</keyword>
<keyword id="KW-0602">Photosynthesis</keyword>
<keyword id="KW-0934">Plastid</keyword>
<keyword id="KW-1185">Reference proteome</keyword>
<keyword id="KW-0732">Signal</keyword>
<keyword id="KW-0793">Thylakoid</keyword>
<keyword id="KW-0812">Transmembrane</keyword>
<keyword id="KW-1133">Transmembrane helix</keyword>
<keyword id="KW-0813">Transport</keyword>
<name>CYF_ORYNI</name>
<organism>
    <name type="scientific">Oryza nivara</name>
    <name type="common">Indian wild rice</name>
    <name type="synonym">Oryza sativa f. spontanea</name>
    <dbReference type="NCBI Taxonomy" id="4536"/>
    <lineage>
        <taxon>Eukaryota</taxon>
        <taxon>Viridiplantae</taxon>
        <taxon>Streptophyta</taxon>
        <taxon>Embryophyta</taxon>
        <taxon>Tracheophyta</taxon>
        <taxon>Spermatophyta</taxon>
        <taxon>Magnoliopsida</taxon>
        <taxon>Liliopsida</taxon>
        <taxon>Poales</taxon>
        <taxon>Poaceae</taxon>
        <taxon>BOP clade</taxon>
        <taxon>Oryzoideae</taxon>
        <taxon>Oryzeae</taxon>
        <taxon>Oryzinae</taxon>
        <taxon>Oryza</taxon>
    </lineage>
</organism>
<accession>Q6ENG0</accession>
<dbReference type="EMBL" id="AP006728">
    <property type="protein sequence ID" value="BAD26792.1"/>
    <property type="molecule type" value="Genomic_DNA"/>
</dbReference>
<dbReference type="RefSeq" id="YP_052763.1">
    <property type="nucleotide sequence ID" value="NC_005973.1"/>
</dbReference>
<dbReference type="SMR" id="Q6ENG0"/>
<dbReference type="STRING" id="4536.Q6ENG0"/>
<dbReference type="GeneID" id="2885883"/>
<dbReference type="eggNOG" id="ENOG502QPT8">
    <property type="taxonomic scope" value="Eukaryota"/>
</dbReference>
<dbReference type="Proteomes" id="UP000006591">
    <property type="component" value="Chloroplast"/>
</dbReference>
<dbReference type="GO" id="GO:0009535">
    <property type="term" value="C:chloroplast thylakoid membrane"/>
    <property type="evidence" value="ECO:0007669"/>
    <property type="project" value="UniProtKB-SubCell"/>
</dbReference>
<dbReference type="GO" id="GO:0009536">
    <property type="term" value="C:plastid"/>
    <property type="evidence" value="ECO:0000305"/>
    <property type="project" value="Gramene"/>
</dbReference>
<dbReference type="GO" id="GO:0009055">
    <property type="term" value="F:electron transfer activity"/>
    <property type="evidence" value="ECO:0007669"/>
    <property type="project" value="UniProtKB-UniRule"/>
</dbReference>
<dbReference type="GO" id="GO:0020037">
    <property type="term" value="F:heme binding"/>
    <property type="evidence" value="ECO:0007669"/>
    <property type="project" value="InterPro"/>
</dbReference>
<dbReference type="GO" id="GO:0005506">
    <property type="term" value="F:iron ion binding"/>
    <property type="evidence" value="ECO:0007669"/>
    <property type="project" value="InterPro"/>
</dbReference>
<dbReference type="GO" id="GO:0015979">
    <property type="term" value="P:photosynthesis"/>
    <property type="evidence" value="ECO:0007669"/>
    <property type="project" value="UniProtKB-UniRule"/>
</dbReference>
<dbReference type="FunFam" id="1.20.5.700:FF:000001">
    <property type="entry name" value="Cytochrome f"/>
    <property type="match status" value="1"/>
</dbReference>
<dbReference type="FunFam" id="2.40.50.100:FF:000007">
    <property type="entry name" value="Cytochrome f"/>
    <property type="match status" value="1"/>
</dbReference>
<dbReference type="FunFam" id="2.60.40.830:FF:000001">
    <property type="entry name" value="Cytochrome f"/>
    <property type="match status" value="1"/>
</dbReference>
<dbReference type="Gene3D" id="2.40.50.100">
    <property type="match status" value="1"/>
</dbReference>
<dbReference type="Gene3D" id="2.60.40.830">
    <property type="entry name" value="Cytochrome f large domain"/>
    <property type="match status" value="1"/>
</dbReference>
<dbReference type="Gene3D" id="1.20.5.700">
    <property type="entry name" value="Single helix bin"/>
    <property type="match status" value="1"/>
</dbReference>
<dbReference type="HAMAP" id="MF_00610">
    <property type="entry name" value="Cytb6_f_cytF"/>
    <property type="match status" value="1"/>
</dbReference>
<dbReference type="InterPro" id="IPR024058">
    <property type="entry name" value="Cyt-f_TM"/>
</dbReference>
<dbReference type="InterPro" id="IPR002325">
    <property type="entry name" value="Cyt_f"/>
</dbReference>
<dbReference type="InterPro" id="IPR024094">
    <property type="entry name" value="Cyt_f_lg_dom"/>
</dbReference>
<dbReference type="InterPro" id="IPR036826">
    <property type="entry name" value="Cyt_f_lg_dom_sf"/>
</dbReference>
<dbReference type="InterPro" id="IPR011054">
    <property type="entry name" value="Rudment_hybrid_motif"/>
</dbReference>
<dbReference type="PANTHER" id="PTHR33288">
    <property type="match status" value="1"/>
</dbReference>
<dbReference type="PANTHER" id="PTHR33288:SF10">
    <property type="entry name" value="CYTOCHROME F"/>
    <property type="match status" value="1"/>
</dbReference>
<dbReference type="Pfam" id="PF01333">
    <property type="entry name" value="Apocytochr_F_C"/>
    <property type="match status" value="1"/>
</dbReference>
<dbReference type="Pfam" id="PF16639">
    <property type="entry name" value="Apocytochr_F_N"/>
    <property type="match status" value="1"/>
</dbReference>
<dbReference type="PRINTS" id="PR00610">
    <property type="entry name" value="CYTOCHROMEF"/>
</dbReference>
<dbReference type="SUPFAM" id="SSF103431">
    <property type="entry name" value="Cytochrome f subunit of the cytochrome b6f complex, transmembrane anchor"/>
    <property type="match status" value="1"/>
</dbReference>
<dbReference type="SUPFAM" id="SSF49441">
    <property type="entry name" value="Cytochrome f, large domain"/>
    <property type="match status" value="1"/>
</dbReference>
<dbReference type="SUPFAM" id="SSF51246">
    <property type="entry name" value="Rudiment single hybrid motif"/>
    <property type="match status" value="1"/>
</dbReference>
<dbReference type="PROSITE" id="PS51010">
    <property type="entry name" value="CYTF"/>
    <property type="match status" value="1"/>
</dbReference>